<gene>
    <name type="ordered locus">Mboo_1843</name>
</gene>
<sequence length="279" mass="29096">MGVRGFFAITRPANSVVAGLAAIVAYLIATGTLVYGVLLLMAVVLLVTAAGNVINDYFDAAIDTINRPDRPIPSGAVSRNAALAWAFSLFLLGLAVSVFTTPLCMGIALVNALLLVLYAARLKSTPFFGNAAVAFLSASIFLFGGAYAGWHALLDMLPIAAITFLAMLARELLKDAEDIEGDRAHGADTLAIRIGVRKTALIAFACTAFAIAASAVPYLWWGGWYLAGIAAVDLVILFAAGRSLGCTDPVSLKATGSTTLLKLGMFASLVVFTLSAVFL</sequence>
<feature type="chain" id="PRO_0000350708" description="Digeranylgeranylglyceryl phosphate synthase">
    <location>
        <begin position="1"/>
        <end position="279"/>
    </location>
</feature>
<feature type="transmembrane region" description="Helical" evidence="1">
    <location>
        <begin position="5"/>
        <end position="25"/>
    </location>
</feature>
<feature type="transmembrane region" description="Helical" evidence="1">
    <location>
        <begin position="27"/>
        <end position="47"/>
    </location>
</feature>
<feature type="transmembrane region" description="Helical" evidence="1">
    <location>
        <begin position="90"/>
        <end position="110"/>
    </location>
</feature>
<feature type="transmembrane region" description="Helical" evidence="1">
    <location>
        <begin position="127"/>
        <end position="147"/>
    </location>
</feature>
<feature type="transmembrane region" description="Helical" evidence="1">
    <location>
        <begin position="148"/>
        <end position="168"/>
    </location>
</feature>
<feature type="transmembrane region" description="Helical" evidence="1">
    <location>
        <begin position="198"/>
        <end position="218"/>
    </location>
</feature>
<feature type="transmembrane region" description="Helical" evidence="1">
    <location>
        <begin position="219"/>
        <end position="239"/>
    </location>
</feature>
<feature type="transmembrane region" description="Helical" evidence="1">
    <location>
        <begin position="259"/>
        <end position="279"/>
    </location>
</feature>
<organism>
    <name type="scientific">Methanoregula boonei (strain DSM 21154 / JCM 14090 / 6A8)</name>
    <dbReference type="NCBI Taxonomy" id="456442"/>
    <lineage>
        <taxon>Archaea</taxon>
        <taxon>Methanobacteriati</taxon>
        <taxon>Methanobacteriota</taxon>
        <taxon>Stenosarchaea group</taxon>
        <taxon>Methanomicrobia</taxon>
        <taxon>Methanomicrobiales</taxon>
        <taxon>Methanoregulaceae</taxon>
        <taxon>Methanoregula</taxon>
    </lineage>
</organism>
<protein>
    <recommendedName>
        <fullName evidence="1">Digeranylgeranylglyceryl phosphate synthase</fullName>
        <shortName evidence="1">DGGGP synthase</shortName>
        <shortName evidence="1">DGGGPS</shortName>
        <ecNumber evidence="1">2.5.1.42</ecNumber>
    </recommendedName>
    <alternativeName>
        <fullName evidence="1">(S)-2,3-di-O-geranylgeranylglyceryl phosphate synthase</fullName>
    </alternativeName>
    <alternativeName>
        <fullName evidence="1">Geranylgeranylglycerol-phosphate geranylgeranyltransferase</fullName>
    </alternativeName>
</protein>
<reference key="1">
    <citation type="journal article" date="2015" name="Microbiology">
        <title>Genome of Methanoregula boonei 6A8 reveals adaptations to oligotrophic peatland environments.</title>
        <authorList>
            <person name="Braeuer S."/>
            <person name="Cadillo-Quiroz H."/>
            <person name="Kyrpides N."/>
            <person name="Woyke T."/>
            <person name="Goodwin L."/>
            <person name="Detter C."/>
            <person name="Podell S."/>
            <person name="Yavitt J.B."/>
            <person name="Zinder S.H."/>
        </authorList>
    </citation>
    <scope>NUCLEOTIDE SEQUENCE [LARGE SCALE GENOMIC DNA]</scope>
    <source>
        <strain>DSM 21154 / JCM 14090 / 6A8</strain>
    </source>
</reference>
<dbReference type="EC" id="2.5.1.42" evidence="1"/>
<dbReference type="EMBL" id="CP000780">
    <property type="protein sequence ID" value="ABS56358.1"/>
    <property type="molecule type" value="Genomic_DNA"/>
</dbReference>
<dbReference type="RefSeq" id="WP_012107409.1">
    <property type="nucleotide sequence ID" value="NC_009712.1"/>
</dbReference>
<dbReference type="SMR" id="A7I9E7"/>
<dbReference type="STRING" id="456442.Mboo_1843"/>
<dbReference type="GeneID" id="5411844"/>
<dbReference type="KEGG" id="mbn:Mboo_1843"/>
<dbReference type="eggNOG" id="arCOG00476">
    <property type="taxonomic scope" value="Archaea"/>
</dbReference>
<dbReference type="HOGENOM" id="CLU_073311_1_1_2"/>
<dbReference type="OrthoDB" id="11851at2157"/>
<dbReference type="UniPathway" id="UPA00940"/>
<dbReference type="Proteomes" id="UP000002408">
    <property type="component" value="Chromosome"/>
</dbReference>
<dbReference type="GO" id="GO:0005886">
    <property type="term" value="C:plasma membrane"/>
    <property type="evidence" value="ECO:0007669"/>
    <property type="project" value="UniProtKB-SubCell"/>
</dbReference>
<dbReference type="GO" id="GO:0047295">
    <property type="term" value="F:geranylgeranylglycerol-phosphate geranylgeranyltransferase activity"/>
    <property type="evidence" value="ECO:0007669"/>
    <property type="project" value="UniProtKB-UniRule"/>
</dbReference>
<dbReference type="GO" id="GO:0000287">
    <property type="term" value="F:magnesium ion binding"/>
    <property type="evidence" value="ECO:0007669"/>
    <property type="project" value="UniProtKB-UniRule"/>
</dbReference>
<dbReference type="GO" id="GO:0046474">
    <property type="term" value="P:glycerophospholipid biosynthetic process"/>
    <property type="evidence" value="ECO:0007669"/>
    <property type="project" value="UniProtKB-UniRule"/>
</dbReference>
<dbReference type="CDD" id="cd13961">
    <property type="entry name" value="PT_UbiA_DGGGPS"/>
    <property type="match status" value="1"/>
</dbReference>
<dbReference type="Gene3D" id="1.10.357.140">
    <property type="entry name" value="UbiA prenyltransferase"/>
    <property type="match status" value="1"/>
</dbReference>
<dbReference type="Gene3D" id="1.20.120.1780">
    <property type="entry name" value="UbiA prenyltransferase"/>
    <property type="match status" value="1"/>
</dbReference>
<dbReference type="HAMAP" id="MF_01286">
    <property type="entry name" value="DGGGP_synth"/>
    <property type="match status" value="1"/>
</dbReference>
<dbReference type="InterPro" id="IPR023547">
    <property type="entry name" value="DGGGP_synth"/>
</dbReference>
<dbReference type="InterPro" id="IPR050475">
    <property type="entry name" value="Prenyltransferase_related"/>
</dbReference>
<dbReference type="InterPro" id="IPR000537">
    <property type="entry name" value="UbiA_prenyltransferase"/>
</dbReference>
<dbReference type="InterPro" id="IPR044878">
    <property type="entry name" value="UbiA_sf"/>
</dbReference>
<dbReference type="NCBIfam" id="NF009521">
    <property type="entry name" value="PRK12882.1"/>
    <property type="match status" value="1"/>
</dbReference>
<dbReference type="PANTHER" id="PTHR42723">
    <property type="entry name" value="CHLOROPHYLL SYNTHASE"/>
    <property type="match status" value="1"/>
</dbReference>
<dbReference type="PANTHER" id="PTHR42723:SF1">
    <property type="entry name" value="CHLOROPHYLL SYNTHASE, CHLOROPLASTIC"/>
    <property type="match status" value="1"/>
</dbReference>
<dbReference type="Pfam" id="PF01040">
    <property type="entry name" value="UbiA"/>
    <property type="match status" value="1"/>
</dbReference>
<evidence type="ECO:0000255" key="1">
    <source>
        <dbReference type="HAMAP-Rule" id="MF_01286"/>
    </source>
</evidence>
<accession>A7I9E7</accession>
<name>DGGGP_METB6</name>
<proteinExistence type="inferred from homology"/>
<comment type="function">
    <text evidence="1">Prenyltransferase that catalyzes the transfer of the geranylgeranyl moiety of geranylgeranyl diphosphate (GGPP) to the C2 hydroxyl of (S)-3-O-geranylgeranylglyceryl phosphate (GGGP). This reaction is the second ether-bond-formation step in the biosynthesis of archaeal membrane lipids.</text>
</comment>
<comment type="catalytic activity">
    <reaction evidence="1">
        <text>sn-3-O-(geranylgeranyl)glycerol 1-phosphate + (2E,6E,10E)-geranylgeranyl diphosphate = 2,3-bis-O-(geranylgeranyl)-sn-glycerol 1-phosphate + diphosphate</text>
        <dbReference type="Rhea" id="RHEA:18109"/>
        <dbReference type="ChEBI" id="CHEBI:33019"/>
        <dbReference type="ChEBI" id="CHEBI:57677"/>
        <dbReference type="ChEBI" id="CHEBI:58756"/>
        <dbReference type="ChEBI" id="CHEBI:58837"/>
        <dbReference type="EC" id="2.5.1.42"/>
    </reaction>
</comment>
<comment type="cofactor">
    <cofactor evidence="1">
        <name>Mg(2+)</name>
        <dbReference type="ChEBI" id="CHEBI:18420"/>
    </cofactor>
</comment>
<comment type="pathway">
    <text evidence="1">Membrane lipid metabolism; glycerophospholipid metabolism.</text>
</comment>
<comment type="subcellular location">
    <subcellularLocation>
        <location evidence="1">Cell membrane</location>
        <topology evidence="1">Multi-pass membrane protein</topology>
    </subcellularLocation>
</comment>
<comment type="similarity">
    <text evidence="1">Belongs to the UbiA prenyltransferase family. DGGGP synthase subfamily.</text>
</comment>
<keyword id="KW-1003">Cell membrane</keyword>
<keyword id="KW-0444">Lipid biosynthesis</keyword>
<keyword id="KW-0443">Lipid metabolism</keyword>
<keyword id="KW-0460">Magnesium</keyword>
<keyword id="KW-0472">Membrane</keyword>
<keyword id="KW-0594">Phospholipid biosynthesis</keyword>
<keyword id="KW-1208">Phospholipid metabolism</keyword>
<keyword id="KW-1185">Reference proteome</keyword>
<keyword id="KW-0808">Transferase</keyword>
<keyword id="KW-0812">Transmembrane</keyword>
<keyword id="KW-1133">Transmembrane helix</keyword>